<protein>
    <recommendedName>
        <fullName>Transmembrane protein 119</fullName>
    </recommendedName>
    <alternativeName>
        <fullName>Osteoblast induction factor</fullName>
        <shortName>OBIF</shortName>
    </alternativeName>
</protein>
<evidence type="ECO:0000250" key="1">
    <source>
        <dbReference type="UniProtKB" id="Q4V9L6"/>
    </source>
</evidence>
<evidence type="ECO:0000255" key="2"/>
<evidence type="ECO:0000256" key="3">
    <source>
        <dbReference type="SAM" id="MobiDB-lite"/>
    </source>
</evidence>
<evidence type="ECO:0000269" key="4">
    <source>
    </source>
</evidence>
<evidence type="ECO:0000269" key="5">
    <source>
    </source>
</evidence>
<evidence type="ECO:0000269" key="6">
    <source>
    </source>
</evidence>
<evidence type="ECO:0000269" key="7">
    <source>
    </source>
</evidence>
<evidence type="ECO:0000269" key="8">
    <source>
    </source>
</evidence>
<evidence type="ECO:0000269" key="9">
    <source>
    </source>
</evidence>
<evidence type="ECO:0000305" key="10"/>
<organism>
    <name type="scientific">Mus musculus</name>
    <name type="common">Mouse</name>
    <dbReference type="NCBI Taxonomy" id="10090"/>
    <lineage>
        <taxon>Eukaryota</taxon>
        <taxon>Metazoa</taxon>
        <taxon>Chordata</taxon>
        <taxon>Craniata</taxon>
        <taxon>Vertebrata</taxon>
        <taxon>Euteleostomi</taxon>
        <taxon>Mammalia</taxon>
        <taxon>Eutheria</taxon>
        <taxon>Euarchontoglires</taxon>
        <taxon>Glires</taxon>
        <taxon>Rodentia</taxon>
        <taxon>Myomorpha</taxon>
        <taxon>Muroidea</taxon>
        <taxon>Muridae</taxon>
        <taxon>Murinae</taxon>
        <taxon>Mus</taxon>
        <taxon>Mus</taxon>
    </lineage>
</organism>
<feature type="signal peptide" evidence="2">
    <location>
        <begin position="1"/>
        <end position="20"/>
    </location>
</feature>
<feature type="chain" id="PRO_0000251221" description="Transmembrane protein 119">
    <location>
        <begin position="21"/>
        <end position="280"/>
    </location>
</feature>
<feature type="topological domain" description="Extracellular" evidence="2">
    <location>
        <begin position="21"/>
        <end position="91"/>
    </location>
</feature>
<feature type="transmembrane region" description="Helical" evidence="2">
    <location>
        <begin position="92"/>
        <end position="112"/>
    </location>
</feature>
<feature type="topological domain" description="Cytoplasmic" evidence="2">
    <location>
        <begin position="113"/>
        <end position="280"/>
    </location>
</feature>
<feature type="region of interest" description="Disordered" evidence="3">
    <location>
        <begin position="38"/>
        <end position="73"/>
    </location>
</feature>
<feature type="region of interest" description="Disordered" evidence="3">
    <location>
        <begin position="133"/>
        <end position="162"/>
    </location>
</feature>
<feature type="region of interest" description="Disordered" evidence="3">
    <location>
        <begin position="181"/>
        <end position="280"/>
    </location>
</feature>
<feature type="compositionally biased region" description="Low complexity" evidence="3">
    <location>
        <begin position="38"/>
        <end position="47"/>
    </location>
</feature>
<feature type="compositionally biased region" description="Basic and acidic residues" evidence="3">
    <location>
        <begin position="148"/>
        <end position="162"/>
    </location>
</feature>
<feature type="modified residue" description="Phosphoserine" evidence="1">
    <location>
        <position position="269"/>
    </location>
</feature>
<feature type="glycosylation site" description="O-linked (Xyl...) (chondroitin sulfate) serine" evidence="9">
    <location>
        <position position="36"/>
    </location>
</feature>
<feature type="mutagenesis site" description="Loss of glycosylation. No effect on osteoblast mineralization. Loss of glycosylation; when associated with A-43; A-54; A-60 and A-67." evidence="9">
    <original>S</original>
    <variation>A</variation>
    <location>
        <position position="36"/>
    </location>
</feature>
<feature type="mutagenesis site" description="No loss of glycosylation. Loss of glycosylation; when associated with A-36; A-54; A-60 and A-67." evidence="9">
    <original>S</original>
    <variation>A</variation>
    <location>
        <position position="43"/>
    </location>
</feature>
<feature type="mutagenesis site" description="No loss of glycosylation. Loss of glycosylation; when associated with A-36; A-43; A-60 and A-67." evidence="9">
    <original>T</original>
    <variation>A</variation>
    <location>
        <position position="54"/>
    </location>
</feature>
<feature type="mutagenesis site" description="No loss of glycosylation. Loss of glycosylation; when associated with A-36; A-43; A-54 and A-67." evidence="9">
    <original>T</original>
    <variation>A</variation>
    <location>
        <position position="60"/>
    </location>
</feature>
<feature type="mutagenesis site" description="No loss of glycosylation. Loss of glycosylation; when associated with A-36; A-43; A-54 and A-60." evidence="9">
    <original>T</original>
    <variation>A</variation>
    <location>
        <position position="67"/>
    </location>
</feature>
<feature type="sequence conflict" description="In Ref. 1; BAC37292." evidence="10" ref="1">
    <original>L</original>
    <variation>H</variation>
    <location>
        <position position="78"/>
    </location>
</feature>
<dbReference type="EMBL" id="AK078473">
    <property type="protein sequence ID" value="BAC37292.1"/>
    <property type="molecule type" value="mRNA"/>
</dbReference>
<dbReference type="EMBL" id="AK170712">
    <property type="protein sequence ID" value="BAE41970.1"/>
    <property type="molecule type" value="mRNA"/>
</dbReference>
<dbReference type="EMBL" id="BC025600">
    <property type="protein sequence ID" value="AAH25600.1"/>
    <property type="molecule type" value="mRNA"/>
</dbReference>
<dbReference type="CCDS" id="CCDS19554.1"/>
<dbReference type="RefSeq" id="NP_001412783.1">
    <property type="nucleotide sequence ID" value="NM_001425854.1"/>
</dbReference>
<dbReference type="RefSeq" id="NP_666274.1">
    <property type="nucleotide sequence ID" value="NM_146162.3"/>
</dbReference>
<dbReference type="RefSeq" id="XP_006530350.1">
    <property type="nucleotide sequence ID" value="XM_006530287.3"/>
</dbReference>
<dbReference type="FunCoup" id="Q8R138">
    <property type="interactions" value="502"/>
</dbReference>
<dbReference type="IntAct" id="Q8R138">
    <property type="interactions" value="1"/>
</dbReference>
<dbReference type="MINT" id="Q8R138"/>
<dbReference type="STRING" id="10090.ENSMUSP00000070551"/>
<dbReference type="GlyCosmos" id="Q8R138">
    <property type="glycosylation" value="1 site, No reported glycans"/>
</dbReference>
<dbReference type="GlyGen" id="Q8R138">
    <property type="glycosylation" value="3 sites"/>
</dbReference>
<dbReference type="iPTMnet" id="Q8R138"/>
<dbReference type="PhosphoSitePlus" id="Q8R138"/>
<dbReference type="jPOST" id="Q8R138"/>
<dbReference type="PaxDb" id="10090-ENSMUSP00000070551"/>
<dbReference type="PeptideAtlas" id="Q8R138"/>
<dbReference type="ProteomicsDB" id="259523"/>
<dbReference type="Pumba" id="Q8R138"/>
<dbReference type="Antibodypedia" id="55081">
    <property type="antibodies" value="37 antibodies from 14 providers"/>
</dbReference>
<dbReference type="Ensembl" id="ENSMUST00000067853.6">
    <property type="protein sequence ID" value="ENSMUSP00000070551.6"/>
    <property type="gene ID" value="ENSMUSG00000054675.6"/>
</dbReference>
<dbReference type="GeneID" id="231633"/>
<dbReference type="KEGG" id="mmu:231633"/>
<dbReference type="UCSC" id="uc008yyq.1">
    <property type="organism name" value="mouse"/>
</dbReference>
<dbReference type="AGR" id="MGI:2385228"/>
<dbReference type="CTD" id="338773"/>
<dbReference type="MGI" id="MGI:2385228">
    <property type="gene designation" value="Tmem119"/>
</dbReference>
<dbReference type="VEuPathDB" id="HostDB:ENSMUSG00000054675"/>
<dbReference type="eggNOG" id="ENOG502S283">
    <property type="taxonomic scope" value="Eukaryota"/>
</dbReference>
<dbReference type="GeneTree" id="ENSGT00390000017134"/>
<dbReference type="HOGENOM" id="CLU_086693_0_0_1"/>
<dbReference type="InParanoid" id="Q8R138"/>
<dbReference type="OMA" id="EEPCSGV"/>
<dbReference type="OrthoDB" id="8943443at2759"/>
<dbReference type="PhylomeDB" id="Q8R138"/>
<dbReference type="TreeFam" id="TF336958"/>
<dbReference type="BioGRID-ORCS" id="231633">
    <property type="hits" value="4 hits in 76 CRISPR screens"/>
</dbReference>
<dbReference type="ChiTaRS" id="Tmem119">
    <property type="organism name" value="mouse"/>
</dbReference>
<dbReference type="PRO" id="PR:Q8R138"/>
<dbReference type="Proteomes" id="UP000000589">
    <property type="component" value="Chromosome 5"/>
</dbReference>
<dbReference type="RNAct" id="Q8R138">
    <property type="molecule type" value="protein"/>
</dbReference>
<dbReference type="Bgee" id="ENSMUSG00000054675">
    <property type="expression patterns" value="Expressed in vault of skull and 189 other cell types or tissues"/>
</dbReference>
<dbReference type="ExpressionAtlas" id="Q8R138">
    <property type="expression patterns" value="baseline and differential"/>
</dbReference>
<dbReference type="GO" id="GO:0005783">
    <property type="term" value="C:endoplasmic reticulum"/>
    <property type="evidence" value="ECO:0000314"/>
    <property type="project" value="MGI"/>
</dbReference>
<dbReference type="GO" id="GO:0005789">
    <property type="term" value="C:endoplasmic reticulum membrane"/>
    <property type="evidence" value="ECO:0007669"/>
    <property type="project" value="UniProtKB-SubCell"/>
</dbReference>
<dbReference type="GO" id="GO:0005576">
    <property type="term" value="C:extracellular region"/>
    <property type="evidence" value="ECO:0007669"/>
    <property type="project" value="UniProtKB-SubCell"/>
</dbReference>
<dbReference type="GO" id="GO:0005886">
    <property type="term" value="C:plasma membrane"/>
    <property type="evidence" value="ECO:0000314"/>
    <property type="project" value="UniProtKB"/>
</dbReference>
<dbReference type="GO" id="GO:0031214">
    <property type="term" value="P:biomineral tissue development"/>
    <property type="evidence" value="ECO:0007669"/>
    <property type="project" value="UniProtKB-KW"/>
</dbReference>
<dbReference type="GO" id="GO:0030509">
    <property type="term" value="P:BMP signaling pathway"/>
    <property type="evidence" value="ECO:0000314"/>
    <property type="project" value="ARUK-UCL"/>
</dbReference>
<dbReference type="GO" id="GO:0001958">
    <property type="term" value="P:endochondral ossification"/>
    <property type="evidence" value="ECO:0000315"/>
    <property type="project" value="ARUK-UCL"/>
</dbReference>
<dbReference type="GO" id="GO:0045779">
    <property type="term" value="P:negative regulation of bone resorption"/>
    <property type="evidence" value="ECO:0000315"/>
    <property type="project" value="ARUK-UCL"/>
</dbReference>
<dbReference type="GO" id="GO:0010832">
    <property type="term" value="P:negative regulation of myotube differentiation"/>
    <property type="evidence" value="ECO:0000314"/>
    <property type="project" value="ARUK-UCL"/>
</dbReference>
<dbReference type="GO" id="GO:0001649">
    <property type="term" value="P:osteoblast differentiation"/>
    <property type="evidence" value="ECO:0000314"/>
    <property type="project" value="MGI"/>
</dbReference>
<dbReference type="GO" id="GO:1903012">
    <property type="term" value="P:positive regulation of bone development"/>
    <property type="evidence" value="ECO:0000315"/>
    <property type="project" value="UniProtKB"/>
</dbReference>
<dbReference type="GO" id="GO:0030501">
    <property type="term" value="P:positive regulation of bone mineralization"/>
    <property type="evidence" value="ECO:0000315"/>
    <property type="project" value="UniProtKB"/>
</dbReference>
<dbReference type="GO" id="GO:0010628">
    <property type="term" value="P:positive regulation of gene expression"/>
    <property type="evidence" value="ECO:0000314"/>
    <property type="project" value="ARUK-UCL"/>
</dbReference>
<dbReference type="GO" id="GO:0045669">
    <property type="term" value="P:positive regulation of osteoblast differentiation"/>
    <property type="evidence" value="ECO:0000314"/>
    <property type="project" value="ARUK-UCL"/>
</dbReference>
<dbReference type="GO" id="GO:0033690">
    <property type="term" value="P:positive regulation of osteoblast proliferation"/>
    <property type="evidence" value="ECO:0000314"/>
    <property type="project" value="UniProtKB"/>
</dbReference>
<dbReference type="GO" id="GO:0048515">
    <property type="term" value="P:spermatid differentiation"/>
    <property type="evidence" value="ECO:0000315"/>
    <property type="project" value="UniProtKB"/>
</dbReference>
<dbReference type="GO" id="GO:0007283">
    <property type="term" value="P:spermatogenesis"/>
    <property type="evidence" value="ECO:0000315"/>
    <property type="project" value="UniProtKB"/>
</dbReference>
<dbReference type="InterPro" id="IPR031453">
    <property type="entry name" value="TMEM119"/>
</dbReference>
<dbReference type="PANTHER" id="PTHR28645">
    <property type="entry name" value="TRANSMEMBRANE PROTEIN 119"/>
    <property type="match status" value="1"/>
</dbReference>
<dbReference type="PANTHER" id="PTHR28645:SF1">
    <property type="entry name" value="TRANSMEMBRANE PROTEIN 119"/>
    <property type="match status" value="1"/>
</dbReference>
<dbReference type="Pfam" id="PF15724">
    <property type="entry name" value="TMEM119"/>
    <property type="match status" value="1"/>
</dbReference>
<sequence length="280" mass="29401">MVPWFLLSLLLLARPVPGVAYSVSLPASFLEDVAGSGEAEGSSASSPSLPPPGTPAFSPTPERPQPTALDGPVPPTNLLEGIMDFFRQYVMLIAVVGSLTFLIMFIVCAALITRQKHKATAYYPSSFPEKKYVDQRDRAGGPRTFSEVPDRAPDSRHEEGLDTSHQLQADILAATQNLRSPARALPGNGEGAKPVKGGSEEEEEEVLSGQEEAQEAPVCGVTEEKLGVPEESVSAEAEGVPATSEGQGEAEGSFSLAQESQGATGPPESPCACNRVSPSV</sequence>
<accession>Q8R138</accession>
<accession>Q8BP14</accession>
<keyword id="KW-0091">Biomineralization</keyword>
<keyword id="KW-1003">Cell membrane</keyword>
<keyword id="KW-0963">Cytoplasm</keyword>
<keyword id="KW-0221">Differentiation</keyword>
<keyword id="KW-0256">Endoplasmic reticulum</keyword>
<keyword id="KW-0325">Glycoprotein</keyword>
<keyword id="KW-0472">Membrane</keyword>
<keyword id="KW-0892">Osteogenesis</keyword>
<keyword id="KW-0597">Phosphoprotein</keyword>
<keyword id="KW-0654">Proteoglycan</keyword>
<keyword id="KW-1185">Reference proteome</keyword>
<keyword id="KW-0964">Secreted</keyword>
<keyword id="KW-0732">Signal</keyword>
<keyword id="KW-0744">Spermatogenesis</keyword>
<keyword id="KW-0812">Transmembrane</keyword>
<keyword id="KW-1133">Transmembrane helix</keyword>
<reference key="1">
    <citation type="journal article" date="2005" name="Science">
        <title>The transcriptional landscape of the mammalian genome.</title>
        <authorList>
            <person name="Carninci P."/>
            <person name="Kasukawa T."/>
            <person name="Katayama S."/>
            <person name="Gough J."/>
            <person name="Frith M.C."/>
            <person name="Maeda N."/>
            <person name="Oyama R."/>
            <person name="Ravasi T."/>
            <person name="Lenhard B."/>
            <person name="Wells C."/>
            <person name="Kodzius R."/>
            <person name="Shimokawa K."/>
            <person name="Bajic V.B."/>
            <person name="Brenner S.E."/>
            <person name="Batalov S."/>
            <person name="Forrest A.R."/>
            <person name="Zavolan M."/>
            <person name="Davis M.J."/>
            <person name="Wilming L.G."/>
            <person name="Aidinis V."/>
            <person name="Allen J.E."/>
            <person name="Ambesi-Impiombato A."/>
            <person name="Apweiler R."/>
            <person name="Aturaliya R.N."/>
            <person name="Bailey T.L."/>
            <person name="Bansal M."/>
            <person name="Baxter L."/>
            <person name="Beisel K.W."/>
            <person name="Bersano T."/>
            <person name="Bono H."/>
            <person name="Chalk A.M."/>
            <person name="Chiu K.P."/>
            <person name="Choudhary V."/>
            <person name="Christoffels A."/>
            <person name="Clutterbuck D.R."/>
            <person name="Crowe M.L."/>
            <person name="Dalla E."/>
            <person name="Dalrymple B.P."/>
            <person name="de Bono B."/>
            <person name="Della Gatta G."/>
            <person name="di Bernardo D."/>
            <person name="Down T."/>
            <person name="Engstrom P."/>
            <person name="Fagiolini M."/>
            <person name="Faulkner G."/>
            <person name="Fletcher C.F."/>
            <person name="Fukushima T."/>
            <person name="Furuno M."/>
            <person name="Futaki S."/>
            <person name="Gariboldi M."/>
            <person name="Georgii-Hemming P."/>
            <person name="Gingeras T.R."/>
            <person name="Gojobori T."/>
            <person name="Green R.E."/>
            <person name="Gustincich S."/>
            <person name="Harbers M."/>
            <person name="Hayashi Y."/>
            <person name="Hensch T.K."/>
            <person name="Hirokawa N."/>
            <person name="Hill D."/>
            <person name="Huminiecki L."/>
            <person name="Iacono M."/>
            <person name="Ikeo K."/>
            <person name="Iwama A."/>
            <person name="Ishikawa T."/>
            <person name="Jakt M."/>
            <person name="Kanapin A."/>
            <person name="Katoh M."/>
            <person name="Kawasawa Y."/>
            <person name="Kelso J."/>
            <person name="Kitamura H."/>
            <person name="Kitano H."/>
            <person name="Kollias G."/>
            <person name="Krishnan S.P."/>
            <person name="Kruger A."/>
            <person name="Kummerfeld S.K."/>
            <person name="Kurochkin I.V."/>
            <person name="Lareau L.F."/>
            <person name="Lazarevic D."/>
            <person name="Lipovich L."/>
            <person name="Liu J."/>
            <person name="Liuni S."/>
            <person name="McWilliam S."/>
            <person name="Madan Babu M."/>
            <person name="Madera M."/>
            <person name="Marchionni L."/>
            <person name="Matsuda H."/>
            <person name="Matsuzawa S."/>
            <person name="Miki H."/>
            <person name="Mignone F."/>
            <person name="Miyake S."/>
            <person name="Morris K."/>
            <person name="Mottagui-Tabar S."/>
            <person name="Mulder N."/>
            <person name="Nakano N."/>
            <person name="Nakauchi H."/>
            <person name="Ng P."/>
            <person name="Nilsson R."/>
            <person name="Nishiguchi S."/>
            <person name="Nishikawa S."/>
            <person name="Nori F."/>
            <person name="Ohara O."/>
            <person name="Okazaki Y."/>
            <person name="Orlando V."/>
            <person name="Pang K.C."/>
            <person name="Pavan W.J."/>
            <person name="Pavesi G."/>
            <person name="Pesole G."/>
            <person name="Petrovsky N."/>
            <person name="Piazza S."/>
            <person name="Reed J."/>
            <person name="Reid J.F."/>
            <person name="Ring B.Z."/>
            <person name="Ringwald M."/>
            <person name="Rost B."/>
            <person name="Ruan Y."/>
            <person name="Salzberg S.L."/>
            <person name="Sandelin A."/>
            <person name="Schneider C."/>
            <person name="Schoenbach C."/>
            <person name="Sekiguchi K."/>
            <person name="Semple C.A."/>
            <person name="Seno S."/>
            <person name="Sessa L."/>
            <person name="Sheng Y."/>
            <person name="Shibata Y."/>
            <person name="Shimada H."/>
            <person name="Shimada K."/>
            <person name="Silva D."/>
            <person name="Sinclair B."/>
            <person name="Sperling S."/>
            <person name="Stupka E."/>
            <person name="Sugiura K."/>
            <person name="Sultana R."/>
            <person name="Takenaka Y."/>
            <person name="Taki K."/>
            <person name="Tammoja K."/>
            <person name="Tan S.L."/>
            <person name="Tang S."/>
            <person name="Taylor M.S."/>
            <person name="Tegner J."/>
            <person name="Teichmann S.A."/>
            <person name="Ueda H.R."/>
            <person name="van Nimwegen E."/>
            <person name="Verardo R."/>
            <person name="Wei C.L."/>
            <person name="Yagi K."/>
            <person name="Yamanishi H."/>
            <person name="Zabarovsky E."/>
            <person name="Zhu S."/>
            <person name="Zimmer A."/>
            <person name="Hide W."/>
            <person name="Bult C."/>
            <person name="Grimmond S.M."/>
            <person name="Teasdale R.D."/>
            <person name="Liu E.T."/>
            <person name="Brusic V."/>
            <person name="Quackenbush J."/>
            <person name="Wahlestedt C."/>
            <person name="Mattick J.S."/>
            <person name="Hume D.A."/>
            <person name="Kai C."/>
            <person name="Sasaki D."/>
            <person name="Tomaru Y."/>
            <person name="Fukuda S."/>
            <person name="Kanamori-Katayama M."/>
            <person name="Suzuki M."/>
            <person name="Aoki J."/>
            <person name="Arakawa T."/>
            <person name="Iida J."/>
            <person name="Imamura K."/>
            <person name="Itoh M."/>
            <person name="Kato T."/>
            <person name="Kawaji H."/>
            <person name="Kawagashira N."/>
            <person name="Kawashima T."/>
            <person name="Kojima M."/>
            <person name="Kondo S."/>
            <person name="Konno H."/>
            <person name="Nakano K."/>
            <person name="Ninomiya N."/>
            <person name="Nishio T."/>
            <person name="Okada M."/>
            <person name="Plessy C."/>
            <person name="Shibata K."/>
            <person name="Shiraki T."/>
            <person name="Suzuki S."/>
            <person name="Tagami M."/>
            <person name="Waki K."/>
            <person name="Watahiki A."/>
            <person name="Okamura-Oho Y."/>
            <person name="Suzuki H."/>
            <person name="Kawai J."/>
            <person name="Hayashizaki Y."/>
        </authorList>
    </citation>
    <scope>NUCLEOTIDE SEQUENCE [LARGE SCALE MRNA]</scope>
    <source>
        <strain>C57BL/6J</strain>
        <strain>NOD</strain>
        <tissue>Muellerian duct</tissue>
    </source>
</reference>
<reference key="2">
    <citation type="journal article" date="2004" name="Genome Res.">
        <title>The status, quality, and expansion of the NIH full-length cDNA project: the Mammalian Gene Collection (MGC).</title>
        <authorList>
            <consortium name="The MGC Project Team"/>
        </authorList>
    </citation>
    <scope>NUCLEOTIDE SEQUENCE [LARGE SCALE MRNA]</scope>
    <source>
        <strain>FVB/N</strain>
        <tissue>Mammary tumor</tissue>
    </source>
</reference>
<reference key="3">
    <citation type="journal article" date="2009" name="BMC Dev. Biol.">
        <title>Isolation and characterization of a novel plasma membrane protein, osteoblast induction factor (obif), associated with osteoblast differentiation.</title>
        <authorList>
            <person name="Kanamoto T."/>
            <person name="Mizuhashi K."/>
            <person name="Terada K."/>
            <person name="Minami T."/>
            <person name="Yoshikawa H."/>
            <person name="Furukawa T."/>
        </authorList>
    </citation>
    <scope>FUNCTION</scope>
    <scope>SUBCELLULAR LOCATION</scope>
    <scope>TISSUE SPECIFICITY</scope>
    <scope>DEVELOPMENTAL STAGE</scope>
</reference>
<reference key="4">
    <citation type="journal article" date="2010" name="Cell">
        <title>A tissue-specific atlas of mouse protein phosphorylation and expression.</title>
        <authorList>
            <person name="Huttlin E.L."/>
            <person name="Jedrychowski M.P."/>
            <person name="Elias J.E."/>
            <person name="Goswami T."/>
            <person name="Rad R."/>
            <person name="Beausoleil S.A."/>
            <person name="Villen J."/>
            <person name="Haas W."/>
            <person name="Sowa M.E."/>
            <person name="Gygi S.P."/>
        </authorList>
    </citation>
    <scope>IDENTIFICATION BY MASS SPECTROMETRY [LARGE SCALE ANALYSIS]</scope>
    <source>
        <tissue>Lung</tissue>
    </source>
</reference>
<reference key="5">
    <citation type="journal article" date="2011" name="J. Biol. Chem.">
        <title>Parathyroid hormone-responsive Smad3-related factor, Tmem119, promotes osteoblast differentiation and interacts with the bone morphogenetic protein-Runx2 pathway.</title>
        <authorList>
            <person name="Hisa I."/>
            <person name="Inoue Y."/>
            <person name="Hendy G.N."/>
            <person name="Canaff L."/>
            <person name="Kitazawa R."/>
            <person name="Kitazawa S."/>
            <person name="Komori T."/>
            <person name="Sugimoto T."/>
            <person name="Seino S."/>
            <person name="Kaji H."/>
        </authorList>
    </citation>
    <scope>FUNCTION</scope>
    <scope>INDUCTION</scope>
    <scope>SUBCELLULAR LOCATION</scope>
    <scope>INTERACTION WITH SMAD1; SMAD5 AND RUNX2</scope>
</reference>
<reference key="6">
    <citation type="journal article" date="2012" name="Bone">
        <title>Interaction of Tmem119 and the bone morphogenetic protein pathway in the commitment of myoblastic into osteoblastic cells.</title>
        <authorList>
            <person name="Tanaka K."/>
            <person name="Inoue Y."/>
            <person name="Hendy G.N."/>
            <person name="Canaff L."/>
            <person name="Katagiri T."/>
            <person name="Kitazawa R."/>
            <person name="Komori T."/>
            <person name="Sugimoto T."/>
            <person name="Seino S."/>
            <person name="Kaji H."/>
        </authorList>
    </citation>
    <scope>FUNCTION</scope>
</reference>
<reference key="7">
    <citation type="journal article" date="2012" name="Dev. Growth Differ.">
        <title>OBIF, an osteoblast induction factor, plays an essential role in bone formation in association with osteoblastogenesis.</title>
        <authorList>
            <person name="Mizuhashi K."/>
            <person name="Kanamoto T."/>
            <person name="Ito M."/>
            <person name="Moriishi T."/>
            <person name="Muranishi Y."/>
            <person name="Omori Y."/>
            <person name="Terada K."/>
            <person name="Komori T."/>
            <person name="Furukawa T."/>
        </authorList>
    </citation>
    <scope>FUNCTION</scope>
    <scope>TISSUE SPECIFICITY</scope>
    <scope>DISRUPTION PHENOTYPE</scope>
</reference>
<reference key="8">
    <citation type="journal article" date="2014" name="Calcif. Tissue Int.">
        <title>Involvement of the osteoinductive factors, Tmem119 and BMP-2, and the ER stress response PERK-eIF2alpha-ATF4 pathway in the commitment of myoblastic into osteoblastic cells.</title>
        <authorList>
            <person name="Tanaka K."/>
            <person name="Kaji H."/>
            <person name="Yamaguchi T."/>
            <person name="Kanazawa I."/>
            <person name="Canaff L."/>
            <person name="Hendy G.N."/>
            <person name="Sugimoto T."/>
        </authorList>
    </citation>
    <scope>FUNCTION</scope>
</reference>
<reference key="9">
    <citation type="journal article" date="2015" name="PLoS ONE">
        <title>Obif, a transmembrane protein, is required for bone mineralization and spermatogenesis in mice.</title>
        <authorList>
            <person name="Mizuhashi K."/>
            <person name="Chaya T."/>
            <person name="Kanamoto T."/>
            <person name="Omori Y."/>
            <person name="Furukawa T."/>
        </authorList>
    </citation>
    <scope>FUNCTION</scope>
    <scope>DISRUPTION PHENOTYPE</scope>
    <scope>TISSUE SPECIFICITY</scope>
    <scope>GLYCOSYLATION AT SER-36</scope>
    <scope>MUTAGENESIS OF SER-36; SER-43; THR-54; THR-60 AND THR-67</scope>
</reference>
<name>TM119_MOUSE</name>
<gene>
    <name type="primary">Tmem119</name>
</gene>
<comment type="function">
    <text evidence="4 5 6 7 8 9">Plays an important role in bone formation and normal bone mineralization (PubMed:20025746, PubMed:22416756, PubMed:26207632). Promotes the differentiation of myoblasts into osteoblasts (PubMed:20025746, PubMed:22416756, PubMed:22579779). May induce the commitment and differentiation of myoblasts into osteoblasts through an enhancement of BMP2 production and interaction with the BMP-RUNX2 pathway (PubMed:21239498, PubMed:22579779). Up-regulates the expression of ATF4 which plays a central role in osteoblast differentiation (PubMed:24362451). Essential for normal spermatogenesis and late testicular differentiation (PubMed:26207632).</text>
</comment>
<comment type="subunit">
    <text evidence="5">Interacts with SMAD1, SMAD5 and RUNX2.</text>
</comment>
<comment type="subcellular location">
    <subcellularLocation>
        <location evidence="4">Cell membrane</location>
        <topology evidence="2">Single-pass type I membrane protein</topology>
    </subcellularLocation>
    <subcellularLocation>
        <location evidence="5">Cytoplasm</location>
    </subcellularLocation>
    <subcellularLocation>
        <location evidence="5">Endoplasmic reticulum membrane</location>
    </subcellularLocation>
    <subcellularLocation>
        <location evidence="1">Secreted</location>
    </subcellularLocation>
</comment>
<comment type="tissue specificity">
    <text evidence="4 9">Expressed in spermatocytes and spermatids in the developing testis (at protein level). Expressed in the brain, heart, lung, spleen, skeletal muscle, ovary, testis and epididymis (PubMed:26207632). Predominantly expressed in osteoblasts (PubMed:20025746).</text>
</comment>
<comment type="developmental stage">
    <text evidence="4">Highly expressed in early and late stage osteoblasts of developing embryos (at protein level).</text>
</comment>
<comment type="induction">
    <text evidence="5">By parathyroid hormone (PTH) in osteoblasts (at protein level).</text>
</comment>
<comment type="disruption phenotype">
    <text evidence="6 9">Mice show a significant decrease in bone formation and bone mineralization and the mineralization defect is independent of calcium and phosphate metabolisms. Testis is smaller, sperm number is significantly decreased and testicular differentiation is perturbed (PubMed:26207632). Significantly reduced cortical thickness in the mid-shaft of the femur at postnatal day 14 (P14), and progressive bone hypoplasia after 8 weeks (PubMed:22416756).</text>
</comment>
<proteinExistence type="evidence at protein level"/>